<feature type="chain" id="PRO_0000292607" description="Proteinase L5">
    <location>
        <begin position="1"/>
        <end position="12" status="greater than"/>
    </location>
</feature>
<feature type="non-terminal residue" evidence="2">
    <location>
        <position position="12"/>
    </location>
</feature>
<proteinExistence type="evidence at protein level"/>
<dbReference type="EC" id="3.4.-.-"/>
<dbReference type="GO" id="GO:0005576">
    <property type="term" value="C:extracellular region"/>
    <property type="evidence" value="ECO:0007669"/>
    <property type="project" value="UniProtKB-SubCell"/>
</dbReference>
<dbReference type="GO" id="GO:0008233">
    <property type="term" value="F:peptidase activity"/>
    <property type="evidence" value="ECO:0007669"/>
    <property type="project" value="UniProtKB-KW"/>
</dbReference>
<dbReference type="GO" id="GO:0042742">
    <property type="term" value="P:defense response to bacterium"/>
    <property type="evidence" value="ECO:0007669"/>
    <property type="project" value="UniProtKB-KW"/>
</dbReference>
<dbReference type="GO" id="GO:0031640">
    <property type="term" value="P:killing of cells of another organism"/>
    <property type="evidence" value="ECO:0007669"/>
    <property type="project" value="UniProtKB-KW"/>
</dbReference>
<dbReference type="GO" id="GO:0006508">
    <property type="term" value="P:proteolysis"/>
    <property type="evidence" value="ECO:0007669"/>
    <property type="project" value="UniProtKB-KW"/>
</dbReference>
<keyword id="KW-0044">Antibiotic</keyword>
<keyword id="KW-0929">Antimicrobial</keyword>
<keyword id="KW-0081">Bacteriolytic enzyme</keyword>
<keyword id="KW-0903">Direct protein sequencing</keyword>
<keyword id="KW-0378">Hydrolase</keyword>
<keyword id="KW-0645">Protease</keyword>
<keyword id="KW-0964">Secreted</keyword>
<sequence>ATVQGGIXYRMP</sequence>
<evidence type="ECO:0000269" key="1">
    <source ref="1"/>
</evidence>
<evidence type="ECO:0000303" key="2">
    <source ref="1"/>
</evidence>
<evidence type="ECO:0000305" key="3"/>
<organism>
    <name type="scientific">Lysobacter sp. (strain XL1)</name>
    <dbReference type="NCBI Taxonomy" id="186334"/>
    <lineage>
        <taxon>Bacteria</taxon>
        <taxon>Pseudomonadati</taxon>
        <taxon>Pseudomonadota</taxon>
        <taxon>Gammaproteobacteria</taxon>
        <taxon>Lysobacterales</taxon>
        <taxon>Lysobacteraceae</taxon>
        <taxon>Lysobacter</taxon>
    </lineage>
</organism>
<protein>
    <recommendedName>
        <fullName>Proteinase L5</fullName>
        <ecNumber>3.4.-.-</ecNumber>
    </recommendedName>
</protein>
<comment type="function">
    <text evidence="1">Peptidase. Has bacteriolytic activity.</text>
</comment>
<comment type="biophysicochemical properties">
    <phDependence>
        <text evidence="1">Optimum pH is 7.5.</text>
    </phDependence>
    <temperatureDependence>
        <text evidence="1">Optimum temperature is 80 degrees Celsius.</text>
    </temperatureDependence>
</comment>
<comment type="subunit">
    <text evidence="1">Monomer.</text>
</comment>
<comment type="subcellular location">
    <subcellularLocation>
        <location evidence="1">Secreted</location>
    </subcellularLocation>
</comment>
<name>PRTL5_LYSSX</name>
<accession>P85158</accession>
<reference evidence="3" key="1">
    <citation type="submission" date="2007-05" db="UniProtKB">
        <title>Identification of extracellular bacteriolytic enzymes from Lysobacter sp. XL1.</title>
        <authorList>
            <person name="Muranova T.A."/>
            <person name="Stepnaya O.A."/>
            <person name="Tsfasman I.M."/>
            <person name="Kulaev I.S."/>
        </authorList>
    </citation>
    <scope>PROTEIN SEQUENCE</scope>
    <scope>FUNCTION</scope>
    <scope>BIOPHYSICOCHEMICAL PROPERTIES</scope>
    <scope>SUBUNIT</scope>
    <scope>SUBCELLULAR LOCATION</scope>
</reference>